<comment type="function">
    <text evidence="4">ABC-type transporter; part of the gene cluster that mediates the biosynthesis of the meroterpenoid compound andrastin A, a promising antitumoral compound (PubMed:28529508). Is required for the production of andrastin A but does not have a significant role in its secretion (PubMed:28529508).</text>
</comment>
<comment type="subcellular location">
    <subcellularLocation>
        <location evidence="1">Membrane</location>
        <topology evidence="1">Multi-pass membrane protein</topology>
    </subcellularLocation>
</comment>
<comment type="disruption phenotype">
    <text evidence="4">Drastically reduces the production of andrastin A but does not affect its secretion.</text>
</comment>
<comment type="similarity">
    <text evidence="6">Belongs to the ABC transporter superfamily. ABCG family. PDR (TC 3.A.1.205) subfamily.</text>
</comment>
<dbReference type="EMBL" id="KY349137">
    <property type="protein sequence ID" value="ART41208.1"/>
    <property type="molecule type" value="Genomic_DNA"/>
</dbReference>
<dbReference type="SMR" id="A0A1Y0BRF0"/>
<dbReference type="GO" id="GO:0016020">
    <property type="term" value="C:membrane"/>
    <property type="evidence" value="ECO:0007669"/>
    <property type="project" value="UniProtKB-SubCell"/>
</dbReference>
<dbReference type="GO" id="GO:0140359">
    <property type="term" value="F:ABC-type transporter activity"/>
    <property type="evidence" value="ECO:0007669"/>
    <property type="project" value="InterPro"/>
</dbReference>
<dbReference type="GO" id="GO:0005524">
    <property type="term" value="F:ATP binding"/>
    <property type="evidence" value="ECO:0007669"/>
    <property type="project" value="UniProtKB-KW"/>
</dbReference>
<dbReference type="GO" id="GO:0016887">
    <property type="term" value="F:ATP hydrolysis activity"/>
    <property type="evidence" value="ECO:0007669"/>
    <property type="project" value="InterPro"/>
</dbReference>
<dbReference type="CDD" id="cd03233">
    <property type="entry name" value="ABCG_PDR_domain1"/>
    <property type="match status" value="1"/>
</dbReference>
<dbReference type="CDD" id="cd03232">
    <property type="entry name" value="ABCG_PDR_domain2"/>
    <property type="match status" value="1"/>
</dbReference>
<dbReference type="FunFam" id="3.40.50.300:FF:000054">
    <property type="entry name" value="ABC multidrug transporter atrF"/>
    <property type="match status" value="1"/>
</dbReference>
<dbReference type="Gene3D" id="3.40.50.300">
    <property type="entry name" value="P-loop containing nucleotide triphosphate hydrolases"/>
    <property type="match status" value="2"/>
</dbReference>
<dbReference type="InterPro" id="IPR003593">
    <property type="entry name" value="AAA+_ATPase"/>
</dbReference>
<dbReference type="InterPro" id="IPR013525">
    <property type="entry name" value="ABC2_TM"/>
</dbReference>
<dbReference type="InterPro" id="IPR003439">
    <property type="entry name" value="ABC_transporter-like_ATP-bd"/>
</dbReference>
<dbReference type="InterPro" id="IPR043926">
    <property type="entry name" value="ABCG_dom"/>
</dbReference>
<dbReference type="InterPro" id="IPR034001">
    <property type="entry name" value="ABCG_PDR_1"/>
</dbReference>
<dbReference type="InterPro" id="IPR034003">
    <property type="entry name" value="ABCG_PDR_2"/>
</dbReference>
<dbReference type="InterPro" id="IPR027417">
    <property type="entry name" value="P-loop_NTPase"/>
</dbReference>
<dbReference type="InterPro" id="IPR010929">
    <property type="entry name" value="PDR_CDR_ABC"/>
</dbReference>
<dbReference type="PANTHER" id="PTHR19241">
    <property type="entry name" value="ATP-BINDING CASSETTE TRANSPORTER"/>
    <property type="match status" value="1"/>
</dbReference>
<dbReference type="Pfam" id="PF01061">
    <property type="entry name" value="ABC2_membrane"/>
    <property type="match status" value="2"/>
</dbReference>
<dbReference type="Pfam" id="PF19055">
    <property type="entry name" value="ABC2_membrane_7"/>
    <property type="match status" value="1"/>
</dbReference>
<dbReference type="Pfam" id="PF00005">
    <property type="entry name" value="ABC_tran"/>
    <property type="match status" value="2"/>
</dbReference>
<dbReference type="Pfam" id="PF06422">
    <property type="entry name" value="PDR_CDR"/>
    <property type="match status" value="1"/>
</dbReference>
<dbReference type="SMART" id="SM00382">
    <property type="entry name" value="AAA"/>
    <property type="match status" value="2"/>
</dbReference>
<dbReference type="SUPFAM" id="SSF52540">
    <property type="entry name" value="P-loop containing nucleoside triphosphate hydrolases"/>
    <property type="match status" value="2"/>
</dbReference>
<dbReference type="PROSITE" id="PS50893">
    <property type="entry name" value="ABC_TRANSPORTER_2"/>
    <property type="match status" value="2"/>
</dbReference>
<organism>
    <name type="scientific">Penicillium roqueforti</name>
    <dbReference type="NCBI Taxonomy" id="5082"/>
    <lineage>
        <taxon>Eukaryota</taxon>
        <taxon>Fungi</taxon>
        <taxon>Dikarya</taxon>
        <taxon>Ascomycota</taxon>
        <taxon>Pezizomycotina</taxon>
        <taxon>Eurotiomycetes</taxon>
        <taxon>Eurotiomycetidae</taxon>
        <taxon>Eurotiales</taxon>
        <taxon>Aspergillaceae</taxon>
        <taxon>Penicillium</taxon>
    </lineage>
</organism>
<gene>
    <name evidence="5" type="primary">adrC</name>
</gene>
<keyword id="KW-0067">ATP-binding</keyword>
<keyword id="KW-0472">Membrane</keyword>
<keyword id="KW-0547">Nucleotide-binding</keyword>
<keyword id="KW-0677">Repeat</keyword>
<keyword id="KW-0812">Transmembrane</keyword>
<keyword id="KW-1133">Transmembrane helix</keyword>
<keyword id="KW-0813">Transport</keyword>
<feature type="chain" id="PRO_0000446491" description="ABC-type transporter adrC">
    <location>
        <begin position="1"/>
        <end position="1452"/>
    </location>
</feature>
<feature type="transmembrane region" description="Helical" evidence="1">
    <location>
        <begin position="487"/>
        <end position="507"/>
    </location>
</feature>
<feature type="transmembrane region" description="Helical" evidence="1">
    <location>
        <begin position="524"/>
        <end position="544"/>
    </location>
</feature>
<feature type="transmembrane region" description="Helical" evidence="1">
    <location>
        <begin position="569"/>
        <end position="589"/>
    </location>
</feature>
<feature type="transmembrane region" description="Helical" evidence="1">
    <location>
        <begin position="598"/>
        <end position="618"/>
    </location>
</feature>
<feature type="transmembrane region" description="Helical" evidence="1">
    <location>
        <begin position="631"/>
        <end position="651"/>
    </location>
</feature>
<feature type="transmembrane region" description="Helical" evidence="1">
    <location>
        <begin position="738"/>
        <end position="758"/>
    </location>
</feature>
<feature type="transmembrane region" description="Helical" evidence="1">
    <location>
        <begin position="1149"/>
        <end position="1169"/>
    </location>
</feature>
<feature type="transmembrane region" description="Helical" evidence="1">
    <location>
        <begin position="1181"/>
        <end position="1201"/>
    </location>
</feature>
<feature type="transmembrane region" description="Helical" evidence="1">
    <location>
        <begin position="1224"/>
        <end position="1244"/>
    </location>
</feature>
<feature type="transmembrane region" description="Helical" evidence="1">
    <location>
        <begin position="1264"/>
        <end position="1284"/>
    </location>
</feature>
<feature type="transmembrane region" description="Helical" evidence="1">
    <location>
        <begin position="1287"/>
        <end position="1307"/>
    </location>
</feature>
<feature type="transmembrane region" description="Helical" evidence="1">
    <location>
        <begin position="1322"/>
        <end position="1344"/>
    </location>
</feature>
<feature type="transmembrane region" description="Helical" evidence="1">
    <location>
        <begin position="1415"/>
        <end position="1435"/>
    </location>
</feature>
<feature type="domain" description="ABC transporter 1" evidence="2">
    <location>
        <begin position="116"/>
        <end position="378"/>
    </location>
</feature>
<feature type="domain" description="ABC transporter 2" evidence="2">
    <location>
        <begin position="813"/>
        <end position="1055"/>
    </location>
</feature>
<feature type="region of interest" description="Disordered" evidence="3">
    <location>
        <begin position="1"/>
        <end position="38"/>
    </location>
</feature>
<feature type="compositionally biased region" description="Polar residues" evidence="3">
    <location>
        <begin position="19"/>
        <end position="28"/>
    </location>
</feature>
<feature type="binding site" evidence="2">
    <location>
        <begin position="849"/>
        <end position="856"/>
    </location>
    <ligand>
        <name>ATP</name>
        <dbReference type="ChEBI" id="CHEBI:30616"/>
    </ligand>
</feature>
<accession>A0A1Y0BRF0</accession>
<sequence length="1452" mass="162812">MAPEEGDQAMSHEDKAACSSLNTTSSTELFDGAPSSENERLRIRQAAVDAMHHGSPKIDPQIWTDVTSHLSGSTTIDARQRDIFFENLTVHGKGSSLQIQKTVLSALLYPIAYPVKRLMSIVGNKKPHNDRRTILHGFNGILNSGELLLVLGRPGSGCSTFLKSLCGYLEGLDLDPVSEIQYRGVPFRVMIEKYRGDLVYNQEADHHFPNLTVGQTLEFAAHARAPHNQVGNSSRDQYVKSVVKVVMDTFGLSHTYDTNVGNDFVPGVSGGERKRVRTDTIVGMNSIAETVLSRTSIAAWDNSTRGLDAATAVDFVRSLRTSAKLAGSCHAVAVYQASEGLYNTFDKVILLYEGREIYFGPRQGAVAYFETMGWKRPPQQVSADFLTAITNPGERQPQVGMENAVPRTPVEFESYWKNSPEHAELETSMRQYKMKTPLDSSEEIKLDEIKRLEQSNHARISSPYLLSVPMQIRLCIVRAWQRTRNDIPALIATAVAQTVVSLIIGSLFYNIPENTAGLGQRASVLFLAVLTNALISLLEITTLYSQRLIVEKQAAYAFVHPFTEAIAEVIVDFPIKLFRCLLSAIIVYFLANLRREASHFFIYIMFQLTAVMTMATIFRTLATVTRTIGQAMALAGVVIICIAVYTGFTVPQFDMPPWFGWIRWLNPIFYTFEGIVSNEFHGRHFECVEYIPSLSFEQGLSFTCSYVGSIAGERYVSGDAYIAGSYDYSYDHVWRNYGILVAFLVFFYVLYFWLTELIPGTTPAHEVLIFRHGGVLQRLVRGDLERGESIRLQEVKSLASEVHSSKAEQKNTFSWKGLSYDIPVKGGEKRLLDDVSGWVKPGSLTALMGVSGAGKTTLMNVLARRMTIGVVTGDMFVNGRELDASFARNIGYVQQQDLHVETCTIREALRFSAALRQPQSVSMEEKYNFVEEVIQLLGMQNFAEAVIGSPGDGLNMEQRKLLSIGVELAAKPQLLIFLDEPTSGLDSRSSWAICAFMRKLADHGQPVLATIHQPSAVLFEQFDRLLFLAKGGRTVYFGDIGKQARTVLEYLEDKGARHCGPTENPAEYMLEVIGGGTQGQSTSIDWVQAWKRSTEYNKLLGELDILASSPSNGVSADPYMVGEFAMPLLVQFYHVMKRDLQQYYRQPEYILAKFGAGVFCGVFIGFSFWKSDNSSQGFQNVLFSLFLLCTIFSTLVNQIMPKFLSRRTLYELRERPARTYSWKVFILCQILVELPWQTLLGICTWASFYFSVYGSGQSSQRQGLVLLFTVQFFIFASTFAQLVVAAVPSVVLGSMLATFTFLLCLLFNGTMQPPSALPRFWIFMNRVSPLTYYVGGISATALHGRPIHCSNRELRVFDPPQGQNCGQYLAEYLKTAQGTLSNPLSTDQCQYCPLRVADQYLAARDISWDDRWRNFGIFWVYIIFNVIGAVLLYYLFRVLPYIRRNRTQKSRN</sequence>
<evidence type="ECO:0000255" key="1"/>
<evidence type="ECO:0000255" key="2">
    <source>
        <dbReference type="PROSITE-ProRule" id="PRU00434"/>
    </source>
</evidence>
<evidence type="ECO:0000256" key="3">
    <source>
        <dbReference type="SAM" id="MobiDB-lite"/>
    </source>
</evidence>
<evidence type="ECO:0000269" key="4">
    <source>
    </source>
</evidence>
<evidence type="ECO:0000303" key="5">
    <source>
    </source>
</evidence>
<evidence type="ECO:0000305" key="6"/>
<protein>
    <recommendedName>
        <fullName evidence="5">ABC-type transporter adrC</fullName>
    </recommendedName>
    <alternativeName>
        <fullName evidence="5">Andrastin A biosynthesis cluster protein C</fullName>
    </alternativeName>
</protein>
<proteinExistence type="inferred from homology"/>
<name>ADRC_PENRO</name>
<reference key="1">
    <citation type="journal article" date="2017" name="Front. Microbiol.">
        <title>The biosynthetic gene cluster for andrastin A in Penicillium roqueforti.</title>
        <authorList>
            <person name="Rojas-Aedo J.F."/>
            <person name="Gil-Duran C."/>
            <person name="Del-Cid A."/>
            <person name="Valdes N."/>
            <person name="Alamos P."/>
            <person name="Vaca I."/>
            <person name="Garcia-Rico R.O."/>
            <person name="Levican G."/>
            <person name="Tello M."/>
            <person name="Chavez R."/>
        </authorList>
    </citation>
    <scope>NUCLEOTIDE SEQUENCE [GENOMIC DNA]</scope>
    <scope>IDENTIFICATION</scope>
    <scope>FUNCTION</scope>
    <scope>DISRUPTION PHENOTYPE</scope>
    <source>
        <strain>CECT 2905</strain>
    </source>
</reference>